<feature type="chain" id="PRO_0000322525" description="A-type ATP synthase subunit E">
    <location>
        <begin position="1"/>
        <end position="200"/>
    </location>
</feature>
<sequence length="200" mass="22142">MAKVQGDPRRFADTVLEKPFKEALARVEEAREAGLKLVEEAYKSALSAARKRLESRVEEARERLQGLKSKADLEVRTEAERVKDELVSRLIEEALAEFRRRKAGMESYRQYLERVLGSAAGESGGSVAKVLCAPEDEEIVREVLGKLGLDGVSVEAVEGIYGGVVVELAEGARLDYTVNNIIAAEEPRLRRAVKRALFEA</sequence>
<keyword id="KW-0066">ATP synthesis</keyword>
<keyword id="KW-1003">Cell membrane</keyword>
<keyword id="KW-0375">Hydrogen ion transport</keyword>
<keyword id="KW-0406">Ion transport</keyword>
<keyword id="KW-0472">Membrane</keyword>
<keyword id="KW-1185">Reference proteome</keyword>
<keyword id="KW-0813">Transport</keyword>
<proteinExistence type="inferred from homology"/>
<comment type="function">
    <text evidence="1">Component of the A-type ATP synthase that produces ATP from ADP in the presence of a proton gradient across the membrane.</text>
</comment>
<comment type="subunit">
    <text evidence="1">Has multiple subunits with at least A(3), B(3), C, D, E, F, H, I and proteolipid K(x).</text>
</comment>
<comment type="subcellular location">
    <subcellularLocation>
        <location evidence="1">Cell membrane</location>
        <topology evidence="1">Peripheral membrane protein</topology>
    </subcellularLocation>
</comment>
<comment type="similarity">
    <text evidence="1">Belongs to the V-ATPase E subunit family.</text>
</comment>
<name>AATE_AERPE</name>
<gene>
    <name evidence="1" type="primary">atpE</name>
    <name type="ordered locus">APE_0409.1</name>
</gene>
<protein>
    <recommendedName>
        <fullName evidence="1">A-type ATP synthase subunit E</fullName>
    </recommendedName>
</protein>
<accession>Q9YF31</accession>
<evidence type="ECO:0000255" key="1">
    <source>
        <dbReference type="HAMAP-Rule" id="MF_00311"/>
    </source>
</evidence>
<reference key="1">
    <citation type="journal article" date="1999" name="DNA Res.">
        <title>Complete genome sequence of an aerobic hyper-thermophilic crenarchaeon, Aeropyrum pernix K1.</title>
        <authorList>
            <person name="Kawarabayasi Y."/>
            <person name="Hino Y."/>
            <person name="Horikawa H."/>
            <person name="Yamazaki S."/>
            <person name="Haikawa Y."/>
            <person name="Jin-no K."/>
            <person name="Takahashi M."/>
            <person name="Sekine M."/>
            <person name="Baba S."/>
            <person name="Ankai A."/>
            <person name="Kosugi H."/>
            <person name="Hosoyama A."/>
            <person name="Fukui S."/>
            <person name="Nagai Y."/>
            <person name="Nishijima K."/>
            <person name="Nakazawa H."/>
            <person name="Takamiya M."/>
            <person name="Masuda S."/>
            <person name="Funahashi T."/>
            <person name="Tanaka T."/>
            <person name="Kudoh Y."/>
            <person name="Yamazaki J."/>
            <person name="Kushida N."/>
            <person name="Oguchi A."/>
            <person name="Aoki K."/>
            <person name="Kubota K."/>
            <person name="Nakamura Y."/>
            <person name="Nomura N."/>
            <person name="Sako Y."/>
            <person name="Kikuchi H."/>
        </authorList>
    </citation>
    <scope>NUCLEOTIDE SEQUENCE [LARGE SCALE GENOMIC DNA]</scope>
    <source>
        <strain>ATCC 700893 / DSM 11879 / JCM 9820 / NBRC 100138 / K1</strain>
    </source>
</reference>
<organism>
    <name type="scientific">Aeropyrum pernix (strain ATCC 700893 / DSM 11879 / JCM 9820 / NBRC 100138 / K1)</name>
    <dbReference type="NCBI Taxonomy" id="272557"/>
    <lineage>
        <taxon>Archaea</taxon>
        <taxon>Thermoproteota</taxon>
        <taxon>Thermoprotei</taxon>
        <taxon>Desulfurococcales</taxon>
        <taxon>Desulfurococcaceae</taxon>
        <taxon>Aeropyrum</taxon>
    </lineage>
</organism>
<dbReference type="EMBL" id="BA000002">
    <property type="protein sequence ID" value="BAA79365.2"/>
    <property type="molecule type" value="Genomic_DNA"/>
</dbReference>
<dbReference type="PIR" id="A72734">
    <property type="entry name" value="A72734"/>
</dbReference>
<dbReference type="RefSeq" id="WP_010865717.1">
    <property type="nucleotide sequence ID" value="NC_000854.2"/>
</dbReference>
<dbReference type="SMR" id="Q9YF31"/>
<dbReference type="STRING" id="272557.APE_0409.1"/>
<dbReference type="EnsemblBacteria" id="BAA79365">
    <property type="protein sequence ID" value="BAA79365"/>
    <property type="gene ID" value="APE_0409.1"/>
</dbReference>
<dbReference type="GeneID" id="1444600"/>
<dbReference type="KEGG" id="ape:APE_0409.1"/>
<dbReference type="eggNOG" id="arCOG00869">
    <property type="taxonomic scope" value="Archaea"/>
</dbReference>
<dbReference type="Proteomes" id="UP000002518">
    <property type="component" value="Chromosome"/>
</dbReference>
<dbReference type="GO" id="GO:0005886">
    <property type="term" value="C:plasma membrane"/>
    <property type="evidence" value="ECO:0007669"/>
    <property type="project" value="UniProtKB-SubCell"/>
</dbReference>
<dbReference type="GO" id="GO:0033178">
    <property type="term" value="C:proton-transporting two-sector ATPase complex, catalytic domain"/>
    <property type="evidence" value="ECO:0007669"/>
    <property type="project" value="InterPro"/>
</dbReference>
<dbReference type="GO" id="GO:0005524">
    <property type="term" value="F:ATP binding"/>
    <property type="evidence" value="ECO:0007669"/>
    <property type="project" value="UniProtKB-UniRule"/>
</dbReference>
<dbReference type="GO" id="GO:0046933">
    <property type="term" value="F:proton-transporting ATP synthase activity, rotational mechanism"/>
    <property type="evidence" value="ECO:0007669"/>
    <property type="project" value="UniProtKB-UniRule"/>
</dbReference>
<dbReference type="GO" id="GO:0046961">
    <property type="term" value="F:proton-transporting ATPase activity, rotational mechanism"/>
    <property type="evidence" value="ECO:0007669"/>
    <property type="project" value="InterPro"/>
</dbReference>
<dbReference type="GO" id="GO:0042777">
    <property type="term" value="P:proton motive force-driven plasma membrane ATP synthesis"/>
    <property type="evidence" value="ECO:0007669"/>
    <property type="project" value="UniProtKB-UniRule"/>
</dbReference>
<dbReference type="Gene3D" id="3.30.2320.30">
    <property type="entry name" value="ATP synthase, E subunit, C-terminal"/>
    <property type="match status" value="1"/>
</dbReference>
<dbReference type="HAMAP" id="MF_00311">
    <property type="entry name" value="ATP_synth_E_arch"/>
    <property type="match status" value="1"/>
</dbReference>
<dbReference type="InterPro" id="IPR038495">
    <property type="entry name" value="ATPase_E_C"/>
</dbReference>
<dbReference type="InterPro" id="IPR002842">
    <property type="entry name" value="ATPase_V1_Esu"/>
</dbReference>
<dbReference type="Pfam" id="PF01991">
    <property type="entry name" value="vATP-synt_E"/>
    <property type="match status" value="1"/>
</dbReference>
<dbReference type="SUPFAM" id="SSF160527">
    <property type="entry name" value="V-type ATPase subunit E-like"/>
    <property type="match status" value="1"/>
</dbReference>